<keyword id="KW-0007">Acetylation</keyword>
<keyword id="KW-0175">Coiled coil</keyword>
<keyword id="KW-1185">Reference proteome</keyword>
<keyword id="KW-0687">Ribonucleoprotein</keyword>
<keyword id="KW-0689">Ribosomal protein</keyword>
<proteinExistence type="evidence at transcript level"/>
<sequence length="191" mass="21922">MFSAQHKIHKEKGVELSELDEQVAQAFFDLENTNQELKSELKDLYVNSAVQVDISGGRKAIVVNVPYRLRKAYRKIHVRLVRELEKKFSGKDVILIATRRIVRPPKKGSAAKRPRNRTLTSVHEAILDDVVLPAEIVGKRTRYRLDGTKIMKVFLDPKERNNTEYKVEAFSAVYKKLTGKDVVFEFPITEA</sequence>
<evidence type="ECO:0000250" key="1">
    <source>
        <dbReference type="UniProtKB" id="Q8LD03"/>
    </source>
</evidence>
<evidence type="ECO:0000255" key="2"/>
<evidence type="ECO:0000303" key="3">
    <source>
    </source>
</evidence>
<evidence type="ECO:0000305" key="4"/>
<protein>
    <recommendedName>
        <fullName evidence="3">Small ribosomal subunit protein eS7z</fullName>
    </recommendedName>
    <alternativeName>
        <fullName>40S ribosomal protein S7-1</fullName>
    </alternativeName>
</protein>
<gene>
    <name type="primary">RPS7A</name>
    <name type="ordered locus">At1g48830</name>
    <name type="ORF">F11I4.1</name>
    <name type="ORF">T24P22.5</name>
</gene>
<comment type="similarity">
    <text evidence="4">Belongs to the eukaryotic ribosomal protein eS7 family.</text>
</comment>
<reference key="1">
    <citation type="journal article" date="2000" name="Nature">
        <title>Sequence and analysis of chromosome 1 of the plant Arabidopsis thaliana.</title>
        <authorList>
            <person name="Theologis A."/>
            <person name="Ecker J.R."/>
            <person name="Palm C.J."/>
            <person name="Federspiel N.A."/>
            <person name="Kaul S."/>
            <person name="White O."/>
            <person name="Alonso J."/>
            <person name="Altafi H."/>
            <person name="Araujo R."/>
            <person name="Bowman C.L."/>
            <person name="Brooks S.Y."/>
            <person name="Buehler E."/>
            <person name="Chan A."/>
            <person name="Chao Q."/>
            <person name="Chen H."/>
            <person name="Cheuk R.F."/>
            <person name="Chin C.W."/>
            <person name="Chung M.K."/>
            <person name="Conn L."/>
            <person name="Conway A.B."/>
            <person name="Conway A.R."/>
            <person name="Creasy T.H."/>
            <person name="Dewar K."/>
            <person name="Dunn P."/>
            <person name="Etgu P."/>
            <person name="Feldblyum T.V."/>
            <person name="Feng J.-D."/>
            <person name="Fong B."/>
            <person name="Fujii C.Y."/>
            <person name="Gill J.E."/>
            <person name="Goldsmith A.D."/>
            <person name="Haas B."/>
            <person name="Hansen N.F."/>
            <person name="Hughes B."/>
            <person name="Huizar L."/>
            <person name="Hunter J.L."/>
            <person name="Jenkins J."/>
            <person name="Johnson-Hopson C."/>
            <person name="Khan S."/>
            <person name="Khaykin E."/>
            <person name="Kim C.J."/>
            <person name="Koo H.L."/>
            <person name="Kremenetskaia I."/>
            <person name="Kurtz D.B."/>
            <person name="Kwan A."/>
            <person name="Lam B."/>
            <person name="Langin-Hooper S."/>
            <person name="Lee A."/>
            <person name="Lee J.M."/>
            <person name="Lenz C.A."/>
            <person name="Li J.H."/>
            <person name="Li Y.-P."/>
            <person name="Lin X."/>
            <person name="Liu S.X."/>
            <person name="Liu Z.A."/>
            <person name="Luros J.S."/>
            <person name="Maiti R."/>
            <person name="Marziali A."/>
            <person name="Militscher J."/>
            <person name="Miranda M."/>
            <person name="Nguyen M."/>
            <person name="Nierman W.C."/>
            <person name="Osborne B.I."/>
            <person name="Pai G."/>
            <person name="Peterson J."/>
            <person name="Pham P.K."/>
            <person name="Rizzo M."/>
            <person name="Rooney T."/>
            <person name="Rowley D."/>
            <person name="Sakano H."/>
            <person name="Salzberg S.L."/>
            <person name="Schwartz J.R."/>
            <person name="Shinn P."/>
            <person name="Southwick A.M."/>
            <person name="Sun H."/>
            <person name="Tallon L.J."/>
            <person name="Tambunga G."/>
            <person name="Toriumi M.J."/>
            <person name="Town C.D."/>
            <person name="Utterback T."/>
            <person name="Van Aken S."/>
            <person name="Vaysberg M."/>
            <person name="Vysotskaia V.S."/>
            <person name="Walker M."/>
            <person name="Wu D."/>
            <person name="Yu G."/>
            <person name="Fraser C.M."/>
            <person name="Venter J.C."/>
            <person name="Davis R.W."/>
        </authorList>
    </citation>
    <scope>NUCLEOTIDE SEQUENCE [LARGE SCALE GENOMIC DNA]</scope>
    <source>
        <strain>cv. Columbia</strain>
    </source>
</reference>
<reference key="2">
    <citation type="journal article" date="2017" name="Plant J.">
        <title>Araport11: a complete reannotation of the Arabidopsis thaliana reference genome.</title>
        <authorList>
            <person name="Cheng C.Y."/>
            <person name="Krishnakumar V."/>
            <person name="Chan A.P."/>
            <person name="Thibaud-Nissen F."/>
            <person name="Schobel S."/>
            <person name="Town C.D."/>
        </authorList>
    </citation>
    <scope>GENOME REANNOTATION</scope>
    <source>
        <strain>cv. Columbia</strain>
    </source>
</reference>
<reference key="3">
    <citation type="journal article" date="2003" name="Science">
        <title>Empirical analysis of transcriptional activity in the Arabidopsis genome.</title>
        <authorList>
            <person name="Yamada K."/>
            <person name="Lim J."/>
            <person name="Dale J.M."/>
            <person name="Chen H."/>
            <person name="Shinn P."/>
            <person name="Palm C.J."/>
            <person name="Southwick A.M."/>
            <person name="Wu H.C."/>
            <person name="Kim C.J."/>
            <person name="Nguyen M."/>
            <person name="Pham P.K."/>
            <person name="Cheuk R.F."/>
            <person name="Karlin-Newmann G."/>
            <person name="Liu S.X."/>
            <person name="Lam B."/>
            <person name="Sakano H."/>
            <person name="Wu T."/>
            <person name="Yu G."/>
            <person name="Miranda M."/>
            <person name="Quach H.L."/>
            <person name="Tripp M."/>
            <person name="Chang C.H."/>
            <person name="Lee J.M."/>
            <person name="Toriumi M.J."/>
            <person name="Chan M.M."/>
            <person name="Tang C.C."/>
            <person name="Onodera C.S."/>
            <person name="Deng J.M."/>
            <person name="Akiyama K."/>
            <person name="Ansari Y."/>
            <person name="Arakawa T."/>
            <person name="Banh J."/>
            <person name="Banno F."/>
            <person name="Bowser L."/>
            <person name="Brooks S.Y."/>
            <person name="Carninci P."/>
            <person name="Chao Q."/>
            <person name="Choy N."/>
            <person name="Enju A."/>
            <person name="Goldsmith A.D."/>
            <person name="Gurjal M."/>
            <person name="Hansen N.F."/>
            <person name="Hayashizaki Y."/>
            <person name="Johnson-Hopson C."/>
            <person name="Hsuan V.W."/>
            <person name="Iida K."/>
            <person name="Karnes M."/>
            <person name="Khan S."/>
            <person name="Koesema E."/>
            <person name="Ishida J."/>
            <person name="Jiang P.X."/>
            <person name="Jones T."/>
            <person name="Kawai J."/>
            <person name="Kamiya A."/>
            <person name="Meyers C."/>
            <person name="Nakajima M."/>
            <person name="Narusaka M."/>
            <person name="Seki M."/>
            <person name="Sakurai T."/>
            <person name="Satou M."/>
            <person name="Tamse R."/>
            <person name="Vaysberg M."/>
            <person name="Wallender E.K."/>
            <person name="Wong C."/>
            <person name="Yamamura Y."/>
            <person name="Yuan S."/>
            <person name="Shinozaki K."/>
            <person name="Davis R.W."/>
            <person name="Theologis A."/>
            <person name="Ecker J.R."/>
        </authorList>
    </citation>
    <scope>NUCLEOTIDE SEQUENCE [LARGE SCALE MRNA]</scope>
    <source>
        <strain>cv. Columbia</strain>
    </source>
</reference>
<reference key="4">
    <citation type="submission" date="2002-03" db="EMBL/GenBank/DDBJ databases">
        <title>Full-length cDNA from Arabidopsis thaliana.</title>
        <authorList>
            <person name="Brover V.V."/>
            <person name="Troukhan M.E."/>
            <person name="Alexandrov N.A."/>
            <person name="Lu Y.-P."/>
            <person name="Flavell R.B."/>
            <person name="Feldmann K.A."/>
        </authorList>
    </citation>
    <scope>NUCLEOTIDE SEQUENCE [LARGE SCALE MRNA]</scope>
</reference>
<reference key="5">
    <citation type="journal article" date="2001" name="Plant Physiol.">
        <title>The organization of cytoplasmic ribosomal protein genes in the Arabidopsis genome.</title>
        <authorList>
            <person name="Barakat A."/>
            <person name="Szick-Miranda K."/>
            <person name="Chang I.-F."/>
            <person name="Guyot R."/>
            <person name="Blanc G."/>
            <person name="Cooke R."/>
            <person name="Delseny M."/>
            <person name="Bailey-Serres J."/>
        </authorList>
    </citation>
    <scope>GENE FAMILY ORGANIZATION</scope>
    <scope>NOMENCLATURE</scope>
</reference>
<reference key="6">
    <citation type="journal article" date="2023" name="Plant Cell">
        <title>An updated nomenclature for plant ribosomal protein genes.</title>
        <authorList>
            <person name="Scarpin M.R."/>
            <person name="Busche M."/>
            <person name="Martinez R.E."/>
            <person name="Harper L.C."/>
            <person name="Reiser L."/>
            <person name="Szakonyi D."/>
            <person name="Merchante C."/>
            <person name="Lan T."/>
            <person name="Xiong W."/>
            <person name="Mo B."/>
            <person name="Tang G."/>
            <person name="Chen X."/>
            <person name="Bailey-Serres J."/>
            <person name="Browning K.S."/>
            <person name="Brunkard J.O."/>
        </authorList>
    </citation>
    <scope>NOMENCLATURE</scope>
</reference>
<name>RS71_ARATH</name>
<accession>Q9C514</accession>
<feature type="chain" id="PRO_0000250183" description="Small ribosomal subunit protein eS7z">
    <location>
        <begin position="1"/>
        <end position="191"/>
    </location>
</feature>
<feature type="coiled-coil region" evidence="2">
    <location>
        <begin position="15"/>
        <end position="50"/>
    </location>
</feature>
<feature type="modified residue" description="N-acetylmethionine" evidence="1">
    <location>
        <position position="1"/>
    </location>
</feature>
<organism>
    <name type="scientific">Arabidopsis thaliana</name>
    <name type="common">Mouse-ear cress</name>
    <dbReference type="NCBI Taxonomy" id="3702"/>
    <lineage>
        <taxon>Eukaryota</taxon>
        <taxon>Viridiplantae</taxon>
        <taxon>Streptophyta</taxon>
        <taxon>Embryophyta</taxon>
        <taxon>Tracheophyta</taxon>
        <taxon>Spermatophyta</taxon>
        <taxon>Magnoliopsida</taxon>
        <taxon>eudicotyledons</taxon>
        <taxon>Gunneridae</taxon>
        <taxon>Pentapetalae</taxon>
        <taxon>rosids</taxon>
        <taxon>malvids</taxon>
        <taxon>Brassicales</taxon>
        <taxon>Brassicaceae</taxon>
        <taxon>Camelineae</taxon>
        <taxon>Arabidopsis</taxon>
    </lineage>
</organism>
<dbReference type="EMBL" id="AC073555">
    <property type="protein sequence ID" value="AAG60128.1"/>
    <property type="molecule type" value="Genomic_DNA"/>
</dbReference>
<dbReference type="EMBL" id="AC084242">
    <property type="protein sequence ID" value="AAG50658.1"/>
    <property type="molecule type" value="Genomic_DNA"/>
</dbReference>
<dbReference type="EMBL" id="CP002684">
    <property type="protein sequence ID" value="AEE32353.1"/>
    <property type="molecule type" value="Genomic_DNA"/>
</dbReference>
<dbReference type="EMBL" id="CP002684">
    <property type="protein sequence ID" value="AEE32354.1"/>
    <property type="molecule type" value="Genomic_DNA"/>
</dbReference>
<dbReference type="EMBL" id="AF412048">
    <property type="protein sequence ID" value="AAL06501.1"/>
    <property type="molecule type" value="mRNA"/>
</dbReference>
<dbReference type="EMBL" id="AY072617">
    <property type="protein sequence ID" value="AAL62008.1"/>
    <property type="molecule type" value="mRNA"/>
</dbReference>
<dbReference type="EMBL" id="AY086866">
    <property type="protein sequence ID" value="AAM63913.1"/>
    <property type="molecule type" value="mRNA"/>
</dbReference>
<dbReference type="PIR" id="A96526">
    <property type="entry name" value="A96526"/>
</dbReference>
<dbReference type="RefSeq" id="NP_175314.1">
    <property type="nucleotide sequence ID" value="NM_103777.4"/>
</dbReference>
<dbReference type="RefSeq" id="NP_849786.1">
    <property type="nucleotide sequence ID" value="NM_179455.3"/>
</dbReference>
<dbReference type="SMR" id="Q9C514"/>
<dbReference type="BioGRID" id="26530">
    <property type="interactions" value="5"/>
</dbReference>
<dbReference type="FunCoup" id="Q9C514">
    <property type="interactions" value="3979"/>
</dbReference>
<dbReference type="STRING" id="3702.Q9C514"/>
<dbReference type="PaxDb" id="3702-AT1G48830.1"/>
<dbReference type="ProteomicsDB" id="226790"/>
<dbReference type="EnsemblPlants" id="AT1G48830.1">
    <property type="protein sequence ID" value="AT1G48830.1"/>
    <property type="gene ID" value="AT1G48830"/>
</dbReference>
<dbReference type="EnsemblPlants" id="AT1G48830.2">
    <property type="protein sequence ID" value="AT1G48830.2"/>
    <property type="gene ID" value="AT1G48830"/>
</dbReference>
<dbReference type="GeneID" id="841305"/>
<dbReference type="Gramene" id="AT1G48830.1">
    <property type="protein sequence ID" value="AT1G48830.1"/>
    <property type="gene ID" value="AT1G48830"/>
</dbReference>
<dbReference type="Gramene" id="AT1G48830.2">
    <property type="protein sequence ID" value="AT1G48830.2"/>
    <property type="gene ID" value="AT1G48830"/>
</dbReference>
<dbReference type="KEGG" id="ath:AT1G48830"/>
<dbReference type="Araport" id="AT1G48830"/>
<dbReference type="TAIR" id="AT1G48830"/>
<dbReference type="eggNOG" id="KOG3320">
    <property type="taxonomic scope" value="Eukaryota"/>
</dbReference>
<dbReference type="HOGENOM" id="CLU_088621_1_2_1"/>
<dbReference type="InParanoid" id="Q9C514"/>
<dbReference type="OMA" id="AAYHKVQ"/>
<dbReference type="OrthoDB" id="1724687at2759"/>
<dbReference type="PhylomeDB" id="Q9C514"/>
<dbReference type="CD-CODE" id="4299E36E">
    <property type="entry name" value="Nucleolus"/>
</dbReference>
<dbReference type="PRO" id="PR:Q9C514"/>
<dbReference type="Proteomes" id="UP000006548">
    <property type="component" value="Chromosome 1"/>
</dbReference>
<dbReference type="ExpressionAtlas" id="Q9C514">
    <property type="expression patterns" value="baseline and differential"/>
</dbReference>
<dbReference type="GO" id="GO:0022626">
    <property type="term" value="C:cytosolic ribosome"/>
    <property type="evidence" value="ECO:0007005"/>
    <property type="project" value="TAIR"/>
</dbReference>
<dbReference type="GO" id="GO:0022627">
    <property type="term" value="C:cytosolic small ribosomal subunit"/>
    <property type="evidence" value="ECO:0007005"/>
    <property type="project" value="TAIR"/>
</dbReference>
<dbReference type="GO" id="GO:0005634">
    <property type="term" value="C:nucleus"/>
    <property type="evidence" value="ECO:0007005"/>
    <property type="project" value="TAIR"/>
</dbReference>
<dbReference type="GO" id="GO:0009505">
    <property type="term" value="C:plant-type cell wall"/>
    <property type="evidence" value="ECO:0007005"/>
    <property type="project" value="TAIR"/>
</dbReference>
<dbReference type="GO" id="GO:0003729">
    <property type="term" value="F:mRNA binding"/>
    <property type="evidence" value="ECO:0000314"/>
    <property type="project" value="TAIR"/>
</dbReference>
<dbReference type="GO" id="GO:0003735">
    <property type="term" value="F:structural constituent of ribosome"/>
    <property type="evidence" value="ECO:0000314"/>
    <property type="project" value="CAFA"/>
</dbReference>
<dbReference type="GO" id="GO:0006412">
    <property type="term" value="P:translation"/>
    <property type="evidence" value="ECO:0007669"/>
    <property type="project" value="InterPro"/>
</dbReference>
<dbReference type="InterPro" id="IPR000554">
    <property type="entry name" value="Ribosomal_eS7"/>
</dbReference>
<dbReference type="InterPro" id="IPR047861">
    <property type="entry name" value="Ribosomal_eS7_CS"/>
</dbReference>
<dbReference type="PANTHER" id="PTHR11278">
    <property type="entry name" value="40S RIBOSOMAL PROTEIN S7"/>
    <property type="match status" value="1"/>
</dbReference>
<dbReference type="PANTHER" id="PTHR11278:SF29">
    <property type="entry name" value="SMALL RIBOSOMAL SUBUNIT PROTEIN ES7Z"/>
    <property type="match status" value="1"/>
</dbReference>
<dbReference type="Pfam" id="PF01251">
    <property type="entry name" value="Ribosomal_S7e"/>
    <property type="match status" value="1"/>
</dbReference>
<dbReference type="PROSITE" id="PS00948">
    <property type="entry name" value="RIBOSOMAL_S7E"/>
    <property type="match status" value="1"/>
</dbReference>